<feature type="chain" id="PRO_0000324433" description="Protein YAE1">
    <location>
        <begin position="1"/>
        <end position="143"/>
    </location>
</feature>
<feature type="region of interest" description="Disordered" evidence="3">
    <location>
        <begin position="1"/>
        <end position="20"/>
    </location>
</feature>
<feature type="region of interest" description="deca-GX3 motif; required for interaction with LTO1" evidence="1">
    <location>
        <begin position="48"/>
        <end position="88"/>
    </location>
</feature>
<protein>
    <recommendedName>
        <fullName>Protein YAE1</fullName>
    </recommendedName>
</protein>
<reference key="1">
    <citation type="journal article" date="2007" name="Nat. Biotechnol.">
        <title>Genome sequence of the lignocellulose-bioconverting and xylose-fermenting yeast Pichia stipitis.</title>
        <authorList>
            <person name="Jeffries T.W."/>
            <person name="Grigoriev I.V."/>
            <person name="Grimwood J."/>
            <person name="Laplaza J.M."/>
            <person name="Aerts A."/>
            <person name="Salamov A."/>
            <person name="Schmutz J."/>
            <person name="Lindquist E."/>
            <person name="Dehal P."/>
            <person name="Shapiro H."/>
            <person name="Jin Y.-S."/>
            <person name="Passoth V."/>
            <person name="Richardson P.M."/>
        </authorList>
    </citation>
    <scope>NUCLEOTIDE SEQUENCE [LARGE SCALE GENOMIC DNA]</scope>
    <source>
        <strain>ATCC 58785 / CBS 6054 / NBRC 10063 / NRRL Y-11545</strain>
    </source>
</reference>
<evidence type="ECO:0000250" key="1">
    <source>
        <dbReference type="UniProtKB" id="P47118"/>
    </source>
</evidence>
<evidence type="ECO:0000250" key="2">
    <source>
        <dbReference type="UniProtKB" id="Q9NRH1"/>
    </source>
</evidence>
<evidence type="ECO:0000256" key="3">
    <source>
        <dbReference type="SAM" id="MobiDB-lite"/>
    </source>
</evidence>
<evidence type="ECO:0000305" key="4"/>
<comment type="function">
    <text evidence="2">The complex LTO1:YAE1 may function as a target specific adapter that probably recruits apo-RPLI1 to the cytosolic iron-sulfur protein assembly (CIA) complex machinery. May be required for biogenesis of the large ribosomal subunit and initiation of translation.</text>
</comment>
<comment type="subunit">
    <text evidence="2">May form a complex with LTO1.</text>
</comment>
<comment type="subcellular location">
    <subcellularLocation>
        <location evidence="1">Cytoplasm</location>
    </subcellularLocation>
    <subcellularLocation>
        <location evidence="1">Nucleus</location>
    </subcellularLocation>
</comment>
<comment type="similarity">
    <text evidence="4">Belongs to the YAE1 family.</text>
</comment>
<proteinExistence type="inferred from homology"/>
<gene>
    <name type="primary">YAE1</name>
    <name type="ORF">PICST_32496</name>
</gene>
<sequence>MGCSNCQPEIKTSLHSKDSNDFEDDVWGDDDVYVDANADVKRAHQKQGYLDGLASAQESSLQSGFDKAFSDGARMGAAVGKILGELRALGESESFYQATKELNIAKIMDKKYFDSELKIQKNHEVIYKWQKIVAQHLEDATKA</sequence>
<dbReference type="EMBL" id="CP000499">
    <property type="protein sequence ID" value="ABN66984.2"/>
    <property type="molecule type" value="Genomic_DNA"/>
</dbReference>
<dbReference type="RefSeq" id="XP_001385013.2">
    <property type="nucleotide sequence ID" value="XM_001384976.1"/>
</dbReference>
<dbReference type="FunCoup" id="A3LWJ7">
    <property type="interactions" value="3"/>
</dbReference>
<dbReference type="STRING" id="322104.A3LWJ7"/>
<dbReference type="GeneID" id="4839203"/>
<dbReference type="KEGG" id="pic:PICST_32496"/>
<dbReference type="eggNOG" id="KOG4774">
    <property type="taxonomic scope" value="Eukaryota"/>
</dbReference>
<dbReference type="HOGENOM" id="CLU_066684_2_0_1"/>
<dbReference type="InParanoid" id="A3LWJ7"/>
<dbReference type="OMA" id="CKNNEAP"/>
<dbReference type="OrthoDB" id="20086at2759"/>
<dbReference type="Proteomes" id="UP000002258">
    <property type="component" value="Chromosome 5"/>
</dbReference>
<dbReference type="GO" id="GO:0097361">
    <property type="term" value="C:cytosolic [4Fe-4S] assembly targeting complex"/>
    <property type="evidence" value="ECO:0007669"/>
    <property type="project" value="EnsemblFungi"/>
</dbReference>
<dbReference type="GO" id="GO:0005634">
    <property type="term" value="C:nucleus"/>
    <property type="evidence" value="ECO:0007669"/>
    <property type="project" value="UniProtKB-SubCell"/>
</dbReference>
<dbReference type="GO" id="GO:0062092">
    <property type="term" value="C:Yae1-Lto1 complex"/>
    <property type="evidence" value="ECO:0007669"/>
    <property type="project" value="EnsemblFungi"/>
</dbReference>
<dbReference type="GO" id="GO:0030674">
    <property type="term" value="F:protein-macromolecule adaptor activity"/>
    <property type="evidence" value="ECO:0007669"/>
    <property type="project" value="EnsemblFungi"/>
</dbReference>
<dbReference type="GO" id="GO:0051604">
    <property type="term" value="P:protein maturation"/>
    <property type="evidence" value="ECO:0000250"/>
    <property type="project" value="UniProtKB"/>
</dbReference>
<dbReference type="InterPro" id="IPR019191">
    <property type="entry name" value="Essential_protein_Yae1_N"/>
</dbReference>
<dbReference type="InterPro" id="IPR038881">
    <property type="entry name" value="Yae1-like"/>
</dbReference>
<dbReference type="PANTHER" id="PTHR18829">
    <property type="entry name" value="PROTEIN YAE1 HOMOLOG"/>
    <property type="match status" value="1"/>
</dbReference>
<dbReference type="PANTHER" id="PTHR18829:SF0">
    <property type="entry name" value="PROTEIN YAE1 HOMOLOG"/>
    <property type="match status" value="1"/>
</dbReference>
<dbReference type="Pfam" id="PF09811">
    <property type="entry name" value="Yae1_N"/>
    <property type="match status" value="1"/>
</dbReference>
<name>YAE1_PICST</name>
<organism>
    <name type="scientific">Scheffersomyces stipitis (strain ATCC 58785 / CBS 6054 / NBRC 10063 / NRRL Y-11545)</name>
    <name type="common">Yeast</name>
    <name type="synonym">Pichia stipitis</name>
    <dbReference type="NCBI Taxonomy" id="322104"/>
    <lineage>
        <taxon>Eukaryota</taxon>
        <taxon>Fungi</taxon>
        <taxon>Dikarya</taxon>
        <taxon>Ascomycota</taxon>
        <taxon>Saccharomycotina</taxon>
        <taxon>Pichiomycetes</taxon>
        <taxon>Debaryomycetaceae</taxon>
        <taxon>Scheffersomyces</taxon>
    </lineage>
</organism>
<keyword id="KW-0963">Cytoplasm</keyword>
<keyword id="KW-0539">Nucleus</keyword>
<keyword id="KW-1185">Reference proteome</keyword>
<accession>A3LWJ7</accession>